<dbReference type="EC" id="1.17.7.3" evidence="1"/>
<dbReference type="EMBL" id="AM408590">
    <property type="protein sequence ID" value="CAL72879.1"/>
    <property type="molecule type" value="Genomic_DNA"/>
</dbReference>
<dbReference type="RefSeq" id="WP_003899517.1">
    <property type="nucleotide sequence ID" value="NC_008769.1"/>
</dbReference>
<dbReference type="SMR" id="A1KML3"/>
<dbReference type="KEGG" id="mbb:BCG_2890c"/>
<dbReference type="HOGENOM" id="CLU_042258_0_0_11"/>
<dbReference type="UniPathway" id="UPA00056">
    <property type="reaction ID" value="UER00096"/>
</dbReference>
<dbReference type="Proteomes" id="UP000001472">
    <property type="component" value="Chromosome"/>
</dbReference>
<dbReference type="GO" id="GO:0051539">
    <property type="term" value="F:4 iron, 4 sulfur cluster binding"/>
    <property type="evidence" value="ECO:0007669"/>
    <property type="project" value="UniProtKB-UniRule"/>
</dbReference>
<dbReference type="GO" id="GO:0046429">
    <property type="term" value="F:4-hydroxy-3-methylbut-2-en-1-yl diphosphate synthase activity (ferredoxin)"/>
    <property type="evidence" value="ECO:0007669"/>
    <property type="project" value="UniProtKB-UniRule"/>
</dbReference>
<dbReference type="GO" id="GO:0141197">
    <property type="term" value="F:4-hydroxy-3-methylbut-2-enyl-diphosphate synthase activity (flavodoxin)"/>
    <property type="evidence" value="ECO:0007669"/>
    <property type="project" value="UniProtKB-EC"/>
</dbReference>
<dbReference type="GO" id="GO:0005506">
    <property type="term" value="F:iron ion binding"/>
    <property type="evidence" value="ECO:0007669"/>
    <property type="project" value="InterPro"/>
</dbReference>
<dbReference type="GO" id="GO:0019288">
    <property type="term" value="P:isopentenyl diphosphate biosynthetic process, methylerythritol 4-phosphate pathway"/>
    <property type="evidence" value="ECO:0007669"/>
    <property type="project" value="UniProtKB-UniRule"/>
</dbReference>
<dbReference type="GO" id="GO:0016114">
    <property type="term" value="P:terpenoid biosynthetic process"/>
    <property type="evidence" value="ECO:0007669"/>
    <property type="project" value="InterPro"/>
</dbReference>
<dbReference type="FunFam" id="3.20.20.20:FF:000003">
    <property type="entry name" value="4-hydroxy-3-methylbut-2-en-1-yl diphosphate synthase (flavodoxin)"/>
    <property type="match status" value="1"/>
</dbReference>
<dbReference type="FunFam" id="3.30.413.10:FF:000001">
    <property type="entry name" value="4-hydroxy-3-methylbut-2-en-1-yl diphosphate synthase (flavodoxin)"/>
    <property type="match status" value="1"/>
</dbReference>
<dbReference type="Gene3D" id="3.20.20.20">
    <property type="entry name" value="Dihydropteroate synthase-like"/>
    <property type="match status" value="1"/>
</dbReference>
<dbReference type="Gene3D" id="3.30.413.10">
    <property type="entry name" value="Sulfite Reductase Hemoprotein, domain 1"/>
    <property type="match status" value="1"/>
</dbReference>
<dbReference type="HAMAP" id="MF_00159">
    <property type="entry name" value="IspG"/>
    <property type="match status" value="1"/>
</dbReference>
<dbReference type="InterPro" id="IPR011005">
    <property type="entry name" value="Dihydropteroate_synth-like_sf"/>
</dbReference>
<dbReference type="InterPro" id="IPR016425">
    <property type="entry name" value="IspG_bac"/>
</dbReference>
<dbReference type="InterPro" id="IPR004588">
    <property type="entry name" value="IspG_bac-typ"/>
</dbReference>
<dbReference type="InterPro" id="IPR045854">
    <property type="entry name" value="NO2/SO3_Rdtase_4Fe4S_sf"/>
</dbReference>
<dbReference type="NCBIfam" id="TIGR00612">
    <property type="entry name" value="ispG_gcpE"/>
    <property type="match status" value="1"/>
</dbReference>
<dbReference type="NCBIfam" id="NF001540">
    <property type="entry name" value="PRK00366.1"/>
    <property type="match status" value="1"/>
</dbReference>
<dbReference type="PANTHER" id="PTHR30454">
    <property type="entry name" value="4-HYDROXY-3-METHYLBUT-2-EN-1-YL DIPHOSPHATE SYNTHASE"/>
    <property type="match status" value="1"/>
</dbReference>
<dbReference type="PANTHER" id="PTHR30454:SF0">
    <property type="entry name" value="4-HYDROXY-3-METHYLBUT-2-EN-1-YL DIPHOSPHATE SYNTHASE (FERREDOXIN), CHLOROPLASTIC"/>
    <property type="match status" value="1"/>
</dbReference>
<dbReference type="Pfam" id="PF04551">
    <property type="entry name" value="GcpE"/>
    <property type="match status" value="1"/>
</dbReference>
<dbReference type="PIRSF" id="PIRSF004640">
    <property type="entry name" value="IspG"/>
    <property type="match status" value="1"/>
</dbReference>
<dbReference type="SUPFAM" id="SSF51717">
    <property type="entry name" value="Dihydropteroate synthetase-like"/>
    <property type="match status" value="1"/>
</dbReference>
<dbReference type="SUPFAM" id="SSF56014">
    <property type="entry name" value="Nitrite and sulphite reductase 4Fe-4S domain-like"/>
    <property type="match status" value="1"/>
</dbReference>
<proteinExistence type="inferred from homology"/>
<protein>
    <recommendedName>
        <fullName evidence="1">4-hydroxy-3-methylbut-2-en-1-yl diphosphate synthase (flavodoxin)</fullName>
        <ecNumber evidence="1">1.17.7.3</ecNumber>
    </recommendedName>
    <alternativeName>
        <fullName evidence="1">1-hydroxy-2-methyl-2-(E)-butenyl 4-diphosphate synthase</fullName>
    </alternativeName>
</protein>
<sequence length="387" mass="40482">MTVGLGMPQPPAPTLAPRRATRQLMVGNVGVGSDHPVSVQSMCTTKTHDVNSTLQQIAELTAAGCDIVRVACPRQEDADALAEIARHSQIPVVADIHFQPRYIFAAIDAGCAAVRVNPGNIKEFDGRVGEVAKAAGAAGIPIRIGVNAGSLDKRFMEKYGKATPEALVESALWEASLFEEHGFGDIKISVKHNDPVVMVAAYELLAARCDYPLHLGVTEAGPAFQGTIKSAVAFGALLSRGIGDTIRVSLSAPPVEEVKVGNQVLESLNLRPRSLEIVSCPSCGRAQVDVYTLANEVTAGLDGLDVPLRVAVMGCVVNGPGEAREADLGVASGNGKGQIFVRGEVIKTVPEAQIVETLIEEAMRLAAEMGEQDPGATPSGSPIVTVS</sequence>
<reference key="1">
    <citation type="journal article" date="2007" name="Proc. Natl. Acad. Sci. U.S.A.">
        <title>Genome plasticity of BCG and impact on vaccine efficacy.</title>
        <authorList>
            <person name="Brosch R."/>
            <person name="Gordon S.V."/>
            <person name="Garnier T."/>
            <person name="Eiglmeier K."/>
            <person name="Frigui W."/>
            <person name="Valenti P."/>
            <person name="Dos Santos S."/>
            <person name="Duthoy S."/>
            <person name="Lacroix C."/>
            <person name="Garcia-Pelayo C."/>
            <person name="Inwald J.K."/>
            <person name="Golby P."/>
            <person name="Garcia J.N."/>
            <person name="Hewinson R.G."/>
            <person name="Behr M.A."/>
            <person name="Quail M.A."/>
            <person name="Churcher C."/>
            <person name="Barrell B.G."/>
            <person name="Parkhill J."/>
            <person name="Cole S.T."/>
        </authorList>
    </citation>
    <scope>NUCLEOTIDE SEQUENCE [LARGE SCALE GENOMIC DNA]</scope>
    <source>
        <strain>BCG / Pasteur 1173P2</strain>
    </source>
</reference>
<gene>
    <name evidence="1" type="primary">ispG</name>
    <name type="ordered locus">BCG_2890c</name>
</gene>
<feature type="chain" id="PRO_1000011484" description="4-hydroxy-3-methylbut-2-en-1-yl diphosphate synthase (flavodoxin)">
    <location>
        <begin position="1"/>
        <end position="387"/>
    </location>
</feature>
<feature type="binding site" evidence="1">
    <location>
        <position position="280"/>
    </location>
    <ligand>
        <name>[4Fe-4S] cluster</name>
        <dbReference type="ChEBI" id="CHEBI:49883"/>
    </ligand>
</feature>
<feature type="binding site" evidence="1">
    <location>
        <position position="283"/>
    </location>
    <ligand>
        <name>[4Fe-4S] cluster</name>
        <dbReference type="ChEBI" id="CHEBI:49883"/>
    </ligand>
</feature>
<feature type="binding site" evidence="1">
    <location>
        <position position="315"/>
    </location>
    <ligand>
        <name>[4Fe-4S] cluster</name>
        <dbReference type="ChEBI" id="CHEBI:49883"/>
    </ligand>
</feature>
<feature type="binding site" evidence="1">
    <location>
        <position position="322"/>
    </location>
    <ligand>
        <name>[4Fe-4S] cluster</name>
        <dbReference type="ChEBI" id="CHEBI:49883"/>
    </ligand>
</feature>
<organism>
    <name type="scientific">Mycobacterium bovis (strain BCG / Pasteur 1173P2)</name>
    <dbReference type="NCBI Taxonomy" id="410289"/>
    <lineage>
        <taxon>Bacteria</taxon>
        <taxon>Bacillati</taxon>
        <taxon>Actinomycetota</taxon>
        <taxon>Actinomycetes</taxon>
        <taxon>Mycobacteriales</taxon>
        <taxon>Mycobacteriaceae</taxon>
        <taxon>Mycobacterium</taxon>
        <taxon>Mycobacterium tuberculosis complex</taxon>
    </lineage>
</organism>
<keyword id="KW-0004">4Fe-4S</keyword>
<keyword id="KW-0408">Iron</keyword>
<keyword id="KW-0411">Iron-sulfur</keyword>
<keyword id="KW-0414">Isoprene biosynthesis</keyword>
<keyword id="KW-0479">Metal-binding</keyword>
<keyword id="KW-0560">Oxidoreductase</keyword>
<comment type="function">
    <text evidence="1">Converts 2C-methyl-D-erythritol 2,4-cyclodiphosphate (ME-2,4cPP) into 1-hydroxy-2-methyl-2-(E)-butenyl 4-diphosphate.</text>
</comment>
<comment type="catalytic activity">
    <reaction evidence="1">
        <text>(2E)-4-hydroxy-3-methylbut-2-enyl diphosphate + oxidized [flavodoxin] + H2O + 2 H(+) = 2-C-methyl-D-erythritol 2,4-cyclic diphosphate + reduced [flavodoxin]</text>
        <dbReference type="Rhea" id="RHEA:43604"/>
        <dbReference type="Rhea" id="RHEA-COMP:10622"/>
        <dbReference type="Rhea" id="RHEA-COMP:10623"/>
        <dbReference type="ChEBI" id="CHEBI:15377"/>
        <dbReference type="ChEBI" id="CHEBI:15378"/>
        <dbReference type="ChEBI" id="CHEBI:57618"/>
        <dbReference type="ChEBI" id="CHEBI:58210"/>
        <dbReference type="ChEBI" id="CHEBI:58483"/>
        <dbReference type="ChEBI" id="CHEBI:128753"/>
        <dbReference type="EC" id="1.17.7.3"/>
    </reaction>
</comment>
<comment type="cofactor">
    <cofactor evidence="1">
        <name>[4Fe-4S] cluster</name>
        <dbReference type="ChEBI" id="CHEBI:49883"/>
    </cofactor>
    <text evidence="1">Binds 1 [4Fe-4S] cluster.</text>
</comment>
<comment type="pathway">
    <text evidence="1">Isoprenoid biosynthesis; isopentenyl diphosphate biosynthesis via DXP pathway; isopentenyl diphosphate from 1-deoxy-D-xylulose 5-phosphate: step 5/6.</text>
</comment>
<comment type="similarity">
    <text evidence="1">Belongs to the IspG family.</text>
</comment>
<evidence type="ECO:0000255" key="1">
    <source>
        <dbReference type="HAMAP-Rule" id="MF_00159"/>
    </source>
</evidence>
<accession>A1KML3</accession>
<name>ISPG_MYCBP</name>